<gene>
    <name type="primary">meu8</name>
    <name type="ORF">SPCC550.10</name>
</gene>
<comment type="catalytic activity">
    <reaction>
        <text>betaine aldehyde + NAD(+) + H2O = glycine betaine + NADH + 2 H(+)</text>
        <dbReference type="Rhea" id="RHEA:15305"/>
        <dbReference type="ChEBI" id="CHEBI:15377"/>
        <dbReference type="ChEBI" id="CHEBI:15378"/>
        <dbReference type="ChEBI" id="CHEBI:15710"/>
        <dbReference type="ChEBI" id="CHEBI:17750"/>
        <dbReference type="ChEBI" id="CHEBI:57540"/>
        <dbReference type="ChEBI" id="CHEBI:57945"/>
        <dbReference type="EC" id="1.2.1.8"/>
    </reaction>
</comment>
<comment type="pathway">
    <text>Amine and polyamine biosynthesis; betaine biosynthesis via choline pathway; betaine from betaine aldehyde: step 1/1.</text>
</comment>
<comment type="similarity">
    <text evidence="4">Belongs to the aldehyde dehydrogenase family.</text>
</comment>
<accession>O59808</accession>
<keyword id="KW-0469">Meiosis</keyword>
<keyword id="KW-0520">NAD</keyword>
<keyword id="KW-0560">Oxidoreductase</keyword>
<keyword id="KW-1185">Reference proteome</keyword>
<feature type="chain" id="PRO_0000056531" description="Probable betaine aldehyde dehydrogenase">
    <location>
        <begin position="1"/>
        <end position="500"/>
    </location>
</feature>
<feature type="active site" description="Proton acceptor" evidence="2 3">
    <location>
        <position position="271"/>
    </location>
</feature>
<feature type="active site" description="Nucleophile" evidence="2 3">
    <location>
        <position position="305"/>
    </location>
</feature>
<feature type="binding site" evidence="1">
    <location>
        <begin position="249"/>
        <end position="254"/>
    </location>
    <ligand>
        <name>NAD(+)</name>
        <dbReference type="ChEBI" id="CHEBI:57540"/>
    </ligand>
</feature>
<feature type="site" description="Transition state stabilizer" evidence="1">
    <location>
        <position position="173"/>
    </location>
</feature>
<reference key="1">
    <citation type="journal article" date="2002" name="Nature">
        <title>The genome sequence of Schizosaccharomyces pombe.</title>
        <authorList>
            <person name="Wood V."/>
            <person name="Gwilliam R."/>
            <person name="Rajandream M.A."/>
            <person name="Lyne M.H."/>
            <person name="Lyne R."/>
            <person name="Stewart A."/>
            <person name="Sgouros J.G."/>
            <person name="Peat N."/>
            <person name="Hayles J."/>
            <person name="Baker S.G."/>
            <person name="Basham D."/>
            <person name="Bowman S."/>
            <person name="Brooks K."/>
            <person name="Brown D."/>
            <person name="Brown S."/>
            <person name="Chillingworth T."/>
            <person name="Churcher C.M."/>
            <person name="Collins M."/>
            <person name="Connor R."/>
            <person name="Cronin A."/>
            <person name="Davis P."/>
            <person name="Feltwell T."/>
            <person name="Fraser A."/>
            <person name="Gentles S."/>
            <person name="Goble A."/>
            <person name="Hamlin N."/>
            <person name="Harris D.E."/>
            <person name="Hidalgo J."/>
            <person name="Hodgson G."/>
            <person name="Holroyd S."/>
            <person name="Hornsby T."/>
            <person name="Howarth S."/>
            <person name="Huckle E.J."/>
            <person name="Hunt S."/>
            <person name="Jagels K."/>
            <person name="James K.D."/>
            <person name="Jones L."/>
            <person name="Jones M."/>
            <person name="Leather S."/>
            <person name="McDonald S."/>
            <person name="McLean J."/>
            <person name="Mooney P."/>
            <person name="Moule S."/>
            <person name="Mungall K.L."/>
            <person name="Murphy L.D."/>
            <person name="Niblett D."/>
            <person name="Odell C."/>
            <person name="Oliver K."/>
            <person name="O'Neil S."/>
            <person name="Pearson D."/>
            <person name="Quail M.A."/>
            <person name="Rabbinowitsch E."/>
            <person name="Rutherford K.M."/>
            <person name="Rutter S."/>
            <person name="Saunders D."/>
            <person name="Seeger K."/>
            <person name="Sharp S."/>
            <person name="Skelton J."/>
            <person name="Simmonds M.N."/>
            <person name="Squares R."/>
            <person name="Squares S."/>
            <person name="Stevens K."/>
            <person name="Taylor K."/>
            <person name="Taylor R.G."/>
            <person name="Tivey A."/>
            <person name="Walsh S.V."/>
            <person name="Warren T."/>
            <person name="Whitehead S."/>
            <person name="Woodward J.R."/>
            <person name="Volckaert G."/>
            <person name="Aert R."/>
            <person name="Robben J."/>
            <person name="Grymonprez B."/>
            <person name="Weltjens I."/>
            <person name="Vanstreels E."/>
            <person name="Rieger M."/>
            <person name="Schaefer M."/>
            <person name="Mueller-Auer S."/>
            <person name="Gabel C."/>
            <person name="Fuchs M."/>
            <person name="Duesterhoeft A."/>
            <person name="Fritzc C."/>
            <person name="Holzer E."/>
            <person name="Moestl D."/>
            <person name="Hilbert H."/>
            <person name="Borzym K."/>
            <person name="Langer I."/>
            <person name="Beck A."/>
            <person name="Lehrach H."/>
            <person name="Reinhardt R."/>
            <person name="Pohl T.M."/>
            <person name="Eger P."/>
            <person name="Zimmermann W."/>
            <person name="Wedler H."/>
            <person name="Wambutt R."/>
            <person name="Purnelle B."/>
            <person name="Goffeau A."/>
            <person name="Cadieu E."/>
            <person name="Dreano S."/>
            <person name="Gloux S."/>
            <person name="Lelaure V."/>
            <person name="Mottier S."/>
            <person name="Galibert F."/>
            <person name="Aves S.J."/>
            <person name="Xiang Z."/>
            <person name="Hunt C."/>
            <person name="Moore K."/>
            <person name="Hurst S.M."/>
            <person name="Lucas M."/>
            <person name="Rochet M."/>
            <person name="Gaillardin C."/>
            <person name="Tallada V.A."/>
            <person name="Garzon A."/>
            <person name="Thode G."/>
            <person name="Daga R.R."/>
            <person name="Cruzado L."/>
            <person name="Jimenez J."/>
            <person name="Sanchez M."/>
            <person name="del Rey F."/>
            <person name="Benito J."/>
            <person name="Dominguez A."/>
            <person name="Revuelta J.L."/>
            <person name="Moreno S."/>
            <person name="Armstrong J."/>
            <person name="Forsburg S.L."/>
            <person name="Cerutti L."/>
            <person name="Lowe T."/>
            <person name="McCombie W.R."/>
            <person name="Paulsen I."/>
            <person name="Potashkin J."/>
            <person name="Shpakovski G.V."/>
            <person name="Ussery D."/>
            <person name="Barrell B.G."/>
            <person name="Nurse P."/>
        </authorList>
    </citation>
    <scope>NUCLEOTIDE SEQUENCE [LARGE SCALE GENOMIC DNA]</scope>
    <source>
        <strain>972 / ATCC 24843</strain>
    </source>
</reference>
<reference key="2">
    <citation type="journal article" date="2001" name="Nucleic Acids Res.">
        <title>Comprehensive isolation of meiosis-specific genes identifies novel proteins and unusual non-coding transcripts in Schizosaccharomyces pombe.</title>
        <authorList>
            <person name="Watanabe T."/>
            <person name="Miyashita K."/>
            <person name="Saito T.T."/>
            <person name="Yoneki T."/>
            <person name="Kakihara Y."/>
            <person name="Nabeshima K."/>
            <person name="Kishi Y.A."/>
            <person name="Shimoda C."/>
            <person name="Nojima H."/>
        </authorList>
    </citation>
    <scope>NUCLEOTIDE SEQUENCE [MRNA] OF 420-500</scope>
    <source>
        <strain>CD16-1</strain>
    </source>
</reference>
<evidence type="ECO:0000250" key="1"/>
<evidence type="ECO:0000255" key="2">
    <source>
        <dbReference type="PROSITE-ProRule" id="PRU10007"/>
    </source>
</evidence>
<evidence type="ECO:0000255" key="3">
    <source>
        <dbReference type="PROSITE-ProRule" id="PRU10008"/>
    </source>
</evidence>
<evidence type="ECO:0000305" key="4"/>
<proteinExistence type="evidence at transcript level"/>
<organism>
    <name type="scientific">Schizosaccharomyces pombe (strain 972 / ATCC 24843)</name>
    <name type="common">Fission yeast</name>
    <dbReference type="NCBI Taxonomy" id="284812"/>
    <lineage>
        <taxon>Eukaryota</taxon>
        <taxon>Fungi</taxon>
        <taxon>Dikarya</taxon>
        <taxon>Ascomycota</taxon>
        <taxon>Taphrinomycotina</taxon>
        <taxon>Schizosaccharomycetes</taxon>
        <taxon>Schizosaccharomycetales</taxon>
        <taxon>Schizosaccharomycetaceae</taxon>
        <taxon>Schizosaccharomyces</taxon>
    </lineage>
</organism>
<dbReference type="EC" id="1.2.1.8"/>
<dbReference type="EMBL" id="CU329672">
    <property type="protein sequence ID" value="CAA19114.1"/>
    <property type="molecule type" value="Genomic_DNA"/>
</dbReference>
<dbReference type="EMBL" id="AB054529">
    <property type="protein sequence ID" value="BAB60885.2"/>
    <property type="molecule type" value="mRNA"/>
</dbReference>
<dbReference type="PIR" id="T41385">
    <property type="entry name" value="T41385"/>
</dbReference>
<dbReference type="RefSeq" id="NP_588102.1">
    <property type="nucleotide sequence ID" value="NM_001023093.2"/>
</dbReference>
<dbReference type="SMR" id="O59808"/>
<dbReference type="BioGRID" id="275834">
    <property type="interactions" value="7"/>
</dbReference>
<dbReference type="FunCoup" id="O59808">
    <property type="interactions" value="37"/>
</dbReference>
<dbReference type="STRING" id="284812.O59808"/>
<dbReference type="iPTMnet" id="O59808"/>
<dbReference type="PaxDb" id="4896-SPCC550.10.1"/>
<dbReference type="EnsemblFungi" id="SPCC550.10.1">
    <property type="protein sequence ID" value="SPCC550.10.1:pep"/>
    <property type="gene ID" value="SPCC550.10"/>
</dbReference>
<dbReference type="GeneID" id="2539264"/>
<dbReference type="KEGG" id="spo:2539264"/>
<dbReference type="PomBase" id="SPCC550.10"/>
<dbReference type="VEuPathDB" id="FungiDB:SPCC550.10"/>
<dbReference type="eggNOG" id="KOG2450">
    <property type="taxonomic scope" value="Eukaryota"/>
</dbReference>
<dbReference type="HOGENOM" id="CLU_005391_0_2_1"/>
<dbReference type="InParanoid" id="O59808"/>
<dbReference type="OMA" id="WTRMLVH"/>
<dbReference type="PhylomeDB" id="O59808"/>
<dbReference type="UniPathway" id="UPA00529">
    <property type="reaction ID" value="UER00386"/>
</dbReference>
<dbReference type="PRO" id="PR:O59808"/>
<dbReference type="Proteomes" id="UP000002485">
    <property type="component" value="Chromosome III"/>
</dbReference>
<dbReference type="GO" id="GO:0005829">
    <property type="term" value="C:cytosol"/>
    <property type="evidence" value="ECO:0007005"/>
    <property type="project" value="PomBase"/>
</dbReference>
<dbReference type="GO" id="GO:0005634">
    <property type="term" value="C:nucleus"/>
    <property type="evidence" value="ECO:0007005"/>
    <property type="project" value="PomBase"/>
</dbReference>
<dbReference type="GO" id="GO:0008802">
    <property type="term" value="F:betaine-aldehyde dehydrogenase (NAD+) activity"/>
    <property type="evidence" value="ECO:0007669"/>
    <property type="project" value="UniProtKB-EC"/>
</dbReference>
<dbReference type="GO" id="GO:0070458">
    <property type="term" value="P:cellular detoxification of nitrogen compound"/>
    <property type="evidence" value="ECO:0000305"/>
    <property type="project" value="PomBase"/>
</dbReference>
<dbReference type="GO" id="GO:0019285">
    <property type="term" value="P:glycine betaine biosynthetic process from choline"/>
    <property type="evidence" value="ECO:0007669"/>
    <property type="project" value="UniProtKB-UniPathway"/>
</dbReference>
<dbReference type="GO" id="GO:0051321">
    <property type="term" value="P:meiotic cell cycle"/>
    <property type="evidence" value="ECO:0007669"/>
    <property type="project" value="UniProtKB-KW"/>
</dbReference>
<dbReference type="CDD" id="cd07078">
    <property type="entry name" value="ALDH"/>
    <property type="match status" value="1"/>
</dbReference>
<dbReference type="FunFam" id="3.40.309.10:FF:000012">
    <property type="entry name" value="Betaine aldehyde dehydrogenase"/>
    <property type="match status" value="1"/>
</dbReference>
<dbReference type="FunFam" id="3.40.605.10:FF:000007">
    <property type="entry name" value="NAD/NADP-dependent betaine aldehyde dehydrogenase"/>
    <property type="match status" value="1"/>
</dbReference>
<dbReference type="Gene3D" id="3.40.605.10">
    <property type="entry name" value="Aldehyde Dehydrogenase, Chain A, domain 1"/>
    <property type="match status" value="1"/>
</dbReference>
<dbReference type="Gene3D" id="3.40.309.10">
    <property type="entry name" value="Aldehyde Dehydrogenase, Chain A, domain 2"/>
    <property type="match status" value="1"/>
</dbReference>
<dbReference type="InterPro" id="IPR016161">
    <property type="entry name" value="Ald_DH/histidinol_DH"/>
</dbReference>
<dbReference type="InterPro" id="IPR016163">
    <property type="entry name" value="Ald_DH_C"/>
</dbReference>
<dbReference type="InterPro" id="IPR016160">
    <property type="entry name" value="Ald_DH_CS_CYS"/>
</dbReference>
<dbReference type="InterPro" id="IPR029510">
    <property type="entry name" value="Ald_DH_CS_GLU"/>
</dbReference>
<dbReference type="InterPro" id="IPR016162">
    <property type="entry name" value="Ald_DH_N"/>
</dbReference>
<dbReference type="InterPro" id="IPR015590">
    <property type="entry name" value="Aldehyde_DH_dom"/>
</dbReference>
<dbReference type="PANTHER" id="PTHR43860">
    <property type="entry name" value="BETAINE ALDEHYDE DEHYDROGENASE"/>
    <property type="match status" value="1"/>
</dbReference>
<dbReference type="PANTHER" id="PTHR43860:SF2">
    <property type="entry name" value="BETAINE ALDEHYDE DEHYDROGENASE-RELATED"/>
    <property type="match status" value="1"/>
</dbReference>
<dbReference type="Pfam" id="PF00171">
    <property type="entry name" value="Aldedh"/>
    <property type="match status" value="1"/>
</dbReference>
<dbReference type="SUPFAM" id="SSF53720">
    <property type="entry name" value="ALDH-like"/>
    <property type="match status" value="1"/>
</dbReference>
<dbReference type="PROSITE" id="PS00070">
    <property type="entry name" value="ALDEHYDE_DEHYDR_CYS"/>
    <property type="match status" value="1"/>
</dbReference>
<dbReference type="PROSITE" id="PS00687">
    <property type="entry name" value="ALDEHYDE_DEHYDR_GLU"/>
    <property type="match status" value="1"/>
</dbReference>
<sequence length="500" mass="54144">MTIDLNVIQSDIISARRAPENSLFIDGKFVSPIEPAAKPIPLINPATEEIIGTCANASAKDVDSAVENAYNTFRSGIWAKWPGKQRGLVLRKIAKMMREKRELLAGIDTINCGKPTPYALFDIDSCADMFEYYAEVAETDNPTVKVPLPNNPGFCAFEKRFPRGVIGVITPWNFPLKMALWKLVPAIASGNCVVLKPSELAPWSCLEFALICKEAGLPDGVLNVIIGSGKESGAALSCHPKIAYLAFTGSLATGKKIMHAAAENIVPLTLELGGKSPLIICEDADLSLAIPSAAFAIFFNQGEACTAASRLIVHESVADEVLGGLVSEANKLIIGNGLDPQVTLGPVVSKTQFEKIVSYIQSAINEGCKCVVGGLPRSEQKGYFIPPTVFTNVQTHNKIWREEIFGPVLAVKTFHTNEEALELANDSEYGLGSGVFSTNPKTLEFFSNNIEAGMCSLNNYHVVTHELPWIGWKHSGLGVGLSKHGYNEYMRLKQITQYVG</sequence>
<name>BADH_SCHPO</name>
<protein>
    <recommendedName>
        <fullName>Probable betaine aldehyde dehydrogenase</fullName>
        <shortName>BADH</shortName>
        <ecNumber>1.2.1.8</ecNumber>
    </recommendedName>
    <alternativeName>
        <fullName>Meiotic expression up-regulated protein 8</fullName>
    </alternativeName>
</protein>